<evidence type="ECO:0000250" key="1"/>
<evidence type="ECO:0000255" key="2">
    <source>
        <dbReference type="HAMAP-Rule" id="MF_01491"/>
    </source>
</evidence>
<name>RNJ_MYCGE</name>
<protein>
    <recommendedName>
        <fullName evidence="2">Ribonuclease J</fullName>
        <shortName evidence="2">RNase J</shortName>
        <ecNumber evidence="2">3.1.-.-</ecNumber>
    </recommendedName>
</protein>
<accession>P47385</accession>
<comment type="function">
    <text evidence="1">An RNase that has 5'-3' exonuclease and possibly endoonuclease activity. Involved in maturation of rRNA and in some organisms also mRNA maturation and/or decay (By similarity).</text>
</comment>
<comment type="cofactor">
    <cofactor evidence="2">
        <name>Zn(2+)</name>
        <dbReference type="ChEBI" id="CHEBI:29105"/>
    </cofactor>
    <text evidence="2">Binds up to 2 Zn(2+) ions per subunit. It is not clear if Zn(2+) or Mg(2+) is physiologically important.</text>
</comment>
<comment type="subunit">
    <text evidence="2">Homodimer, may be a subunit of the RNA degradosome.</text>
</comment>
<comment type="subcellular location">
    <subcellularLocation>
        <location evidence="2">Cytoplasm</location>
    </subcellularLocation>
</comment>
<comment type="similarity">
    <text evidence="2">Belongs to the metallo-beta-lactamase superfamily. RNA-metabolizing metallo-beta-lactamase-like family. Bacterial RNase J subfamily.</text>
</comment>
<sequence length="569" mass="64201">MIKDFNPGDFIGKKPTKIYAFGGIQEVGKNMYGIEYDDEIIIIDCGIKFASDDLLGINGIIPSFEHLIENQSKVKALFITHGHEDHIGGVPYLLKQVDIPVIYAPRIAASLILKKVNEHKDAKLNKIVTFDDFSEFQTKHFKIDFYRVNHSIPDAFGICVQTPNGNIVQSGDYRFDFAAGSEMLDVHKVVKIAERNVHVFMSESTNAEVPGFSQSEKLIYRNIQKILKEARGRVILTTFASNITRINEIIEIALNNKRKICLLGKSMDVNVNISRKIGLMAIDSNDIVEVRDIKNYPDRNILILCTGSQGEEAAALNTMARGKHNWVSLKSTDTIIMSSNPIPGNYAAVENLLNELSKFGVAIYENSSQLKLHASGHATQQELQLMLNLMFPKYLIPIHGEFKMMRTIKNIANECGIKSEDVALLSNGQVMYLIDEELYYSNEIINADPIYIESHNSSPDLARIIKQRQILSRDGMFAVIVVFDKNNNIIGIPTLITRGCFFALDSNPLMTKIAHSVKRTLESVIQSKKFNSHEQLTKELKRVCKETVSYFIWKNKNRNPLISTVLSWI</sequence>
<keyword id="KW-0963">Cytoplasm</keyword>
<keyword id="KW-0255">Endonuclease</keyword>
<keyword id="KW-0269">Exonuclease</keyword>
<keyword id="KW-0378">Hydrolase</keyword>
<keyword id="KW-0479">Metal-binding</keyword>
<keyword id="KW-0540">Nuclease</keyword>
<keyword id="KW-1185">Reference proteome</keyword>
<keyword id="KW-0694">RNA-binding</keyword>
<keyword id="KW-0698">rRNA processing</keyword>
<keyword id="KW-0862">Zinc</keyword>
<organism>
    <name type="scientific">Mycoplasma genitalium (strain ATCC 33530 / DSM 19775 / NCTC 10195 / G37)</name>
    <name type="common">Mycoplasmoides genitalium</name>
    <dbReference type="NCBI Taxonomy" id="243273"/>
    <lineage>
        <taxon>Bacteria</taxon>
        <taxon>Bacillati</taxon>
        <taxon>Mycoplasmatota</taxon>
        <taxon>Mycoplasmoidales</taxon>
        <taxon>Mycoplasmoidaceae</taxon>
        <taxon>Mycoplasmoides</taxon>
    </lineage>
</organism>
<reference key="1">
    <citation type="journal article" date="1995" name="Science">
        <title>The minimal gene complement of Mycoplasma genitalium.</title>
        <authorList>
            <person name="Fraser C.M."/>
            <person name="Gocayne J.D."/>
            <person name="White O."/>
            <person name="Adams M.D."/>
            <person name="Clayton R.A."/>
            <person name="Fleischmann R.D."/>
            <person name="Bult C.J."/>
            <person name="Kerlavage A.R."/>
            <person name="Sutton G.G."/>
            <person name="Kelley J.M."/>
            <person name="Fritchman J.L."/>
            <person name="Weidman J.F."/>
            <person name="Small K.V."/>
            <person name="Sandusky M."/>
            <person name="Fuhrmann J.L."/>
            <person name="Nguyen D.T."/>
            <person name="Utterback T.R."/>
            <person name="Saudek D.M."/>
            <person name="Phillips C.A."/>
            <person name="Merrick J.M."/>
            <person name="Tomb J.-F."/>
            <person name="Dougherty B.A."/>
            <person name="Bott K.F."/>
            <person name="Hu P.-C."/>
            <person name="Lucier T.S."/>
            <person name="Peterson S.N."/>
            <person name="Smith H.O."/>
            <person name="Hutchison C.A. III"/>
            <person name="Venter J.C."/>
        </authorList>
    </citation>
    <scope>NUCLEOTIDE SEQUENCE [LARGE SCALE GENOMIC DNA]</scope>
    <source>
        <strain>ATCC 33530 / DSM 19775 / NCTC 10195 / G37</strain>
    </source>
</reference>
<feature type="chain" id="PRO_0000215271" description="Ribonuclease J">
    <location>
        <begin position="1"/>
        <end position="569"/>
    </location>
</feature>
<feature type="binding site" evidence="2">
    <location>
        <position position="81"/>
    </location>
    <ligand>
        <name>Zn(2+)</name>
        <dbReference type="ChEBI" id="CHEBI:29105"/>
        <label>1</label>
        <note>catalytic</note>
    </ligand>
</feature>
<feature type="binding site" evidence="2">
    <location>
        <position position="83"/>
    </location>
    <ligand>
        <name>Zn(2+)</name>
        <dbReference type="ChEBI" id="CHEBI:29105"/>
        <label>1</label>
        <note>catalytic</note>
    </ligand>
</feature>
<feature type="binding site" evidence="2">
    <location>
        <position position="85"/>
    </location>
    <ligand>
        <name>Zn(2+)</name>
        <dbReference type="ChEBI" id="CHEBI:29105"/>
        <label>2</label>
        <note>catalytic</note>
    </ligand>
</feature>
<feature type="binding site" evidence="2">
    <location>
        <position position="86"/>
    </location>
    <ligand>
        <name>Zn(2+)</name>
        <dbReference type="ChEBI" id="CHEBI:29105"/>
        <label>2</label>
        <note>catalytic</note>
    </ligand>
</feature>
<feature type="binding site" evidence="2">
    <location>
        <position position="150"/>
    </location>
    <ligand>
        <name>Zn(2+)</name>
        <dbReference type="ChEBI" id="CHEBI:29105"/>
        <label>1</label>
        <note>catalytic</note>
    </ligand>
</feature>
<feature type="binding site" evidence="2">
    <location>
        <position position="172"/>
    </location>
    <ligand>
        <name>Zn(2+)</name>
        <dbReference type="ChEBI" id="CHEBI:29105"/>
        <label>1</label>
        <note>catalytic</note>
    </ligand>
</feature>
<feature type="binding site" evidence="2">
    <location>
        <position position="172"/>
    </location>
    <ligand>
        <name>Zn(2+)</name>
        <dbReference type="ChEBI" id="CHEBI:29105"/>
        <label>2</label>
        <note>catalytic</note>
    </ligand>
</feature>
<feature type="binding site" evidence="2">
    <location>
        <begin position="373"/>
        <end position="377"/>
    </location>
    <ligand>
        <name>substrate</name>
    </ligand>
</feature>
<feature type="binding site" evidence="2">
    <location>
        <position position="399"/>
    </location>
    <ligand>
        <name>Zn(2+)</name>
        <dbReference type="ChEBI" id="CHEBI:29105"/>
        <label>2</label>
        <note>catalytic</note>
    </ligand>
</feature>
<dbReference type="EC" id="3.1.-.-" evidence="2"/>
<dbReference type="EMBL" id="L43967">
    <property type="protein sequence ID" value="AAC71357.1"/>
    <property type="molecule type" value="Genomic_DNA"/>
</dbReference>
<dbReference type="PIR" id="D64215">
    <property type="entry name" value="D64215"/>
</dbReference>
<dbReference type="RefSeq" id="WP_009885694.1">
    <property type="nucleotide sequence ID" value="NC_000908.2"/>
</dbReference>
<dbReference type="SMR" id="P47385"/>
<dbReference type="FunCoup" id="P47385">
    <property type="interactions" value="117"/>
</dbReference>
<dbReference type="STRING" id="243273.MG_139"/>
<dbReference type="GeneID" id="88282264"/>
<dbReference type="KEGG" id="mge:MG_139"/>
<dbReference type="eggNOG" id="COG0595">
    <property type="taxonomic scope" value="Bacteria"/>
</dbReference>
<dbReference type="HOGENOM" id="CLU_008727_3_3_14"/>
<dbReference type="InParanoid" id="P47385"/>
<dbReference type="OrthoDB" id="9758375at2"/>
<dbReference type="BioCyc" id="MGEN243273:G1GJ2-153-MONOMER"/>
<dbReference type="Proteomes" id="UP000000807">
    <property type="component" value="Chromosome"/>
</dbReference>
<dbReference type="GO" id="GO:0005737">
    <property type="term" value="C:cytoplasm"/>
    <property type="evidence" value="ECO:0007669"/>
    <property type="project" value="UniProtKB-SubCell"/>
</dbReference>
<dbReference type="GO" id="GO:0004534">
    <property type="term" value="F:5'-3' RNA exonuclease activity"/>
    <property type="evidence" value="ECO:0007669"/>
    <property type="project" value="UniProtKB-UniRule"/>
</dbReference>
<dbReference type="GO" id="GO:0003723">
    <property type="term" value="F:RNA binding"/>
    <property type="evidence" value="ECO:0007669"/>
    <property type="project" value="UniProtKB-UniRule"/>
</dbReference>
<dbReference type="GO" id="GO:0004521">
    <property type="term" value="F:RNA endonuclease activity"/>
    <property type="evidence" value="ECO:0007669"/>
    <property type="project" value="UniProtKB-UniRule"/>
</dbReference>
<dbReference type="GO" id="GO:0008270">
    <property type="term" value="F:zinc ion binding"/>
    <property type="evidence" value="ECO:0007669"/>
    <property type="project" value="InterPro"/>
</dbReference>
<dbReference type="GO" id="GO:0006364">
    <property type="term" value="P:rRNA processing"/>
    <property type="evidence" value="ECO:0007669"/>
    <property type="project" value="UniProtKB-UniRule"/>
</dbReference>
<dbReference type="CDD" id="cd07714">
    <property type="entry name" value="RNaseJ_MBL-fold"/>
    <property type="match status" value="1"/>
</dbReference>
<dbReference type="Gene3D" id="3.10.20.580">
    <property type="match status" value="1"/>
</dbReference>
<dbReference type="Gene3D" id="3.40.50.10710">
    <property type="entry name" value="Metallo-hydrolase/oxidoreductase"/>
    <property type="match status" value="1"/>
</dbReference>
<dbReference type="Gene3D" id="3.60.15.10">
    <property type="entry name" value="Ribonuclease Z/Hydroxyacylglutathione hydrolase-like"/>
    <property type="match status" value="1"/>
</dbReference>
<dbReference type="HAMAP" id="MF_01491">
    <property type="entry name" value="RNase_J_bact"/>
    <property type="match status" value="1"/>
</dbReference>
<dbReference type="InterPro" id="IPR001279">
    <property type="entry name" value="Metallo-B-lactamas"/>
</dbReference>
<dbReference type="InterPro" id="IPR036866">
    <property type="entry name" value="RibonucZ/Hydroxyglut_hydro"/>
</dbReference>
<dbReference type="InterPro" id="IPR011108">
    <property type="entry name" value="RMMBL"/>
</dbReference>
<dbReference type="InterPro" id="IPR004613">
    <property type="entry name" value="RNase_J"/>
</dbReference>
<dbReference type="InterPro" id="IPR042173">
    <property type="entry name" value="RNase_J_2"/>
</dbReference>
<dbReference type="InterPro" id="IPR055132">
    <property type="entry name" value="RNase_J_b_CASP"/>
</dbReference>
<dbReference type="InterPro" id="IPR030854">
    <property type="entry name" value="RNase_J_bac"/>
</dbReference>
<dbReference type="InterPro" id="IPR041636">
    <property type="entry name" value="RNase_J_C"/>
</dbReference>
<dbReference type="InterPro" id="IPR001587">
    <property type="entry name" value="RNase_J_CS"/>
</dbReference>
<dbReference type="NCBIfam" id="TIGR00649">
    <property type="entry name" value="MG423"/>
    <property type="match status" value="1"/>
</dbReference>
<dbReference type="PANTHER" id="PTHR43694">
    <property type="entry name" value="RIBONUCLEASE J"/>
    <property type="match status" value="1"/>
</dbReference>
<dbReference type="PANTHER" id="PTHR43694:SF1">
    <property type="entry name" value="RIBONUCLEASE J"/>
    <property type="match status" value="1"/>
</dbReference>
<dbReference type="Pfam" id="PF00753">
    <property type="entry name" value="Lactamase_B"/>
    <property type="match status" value="1"/>
</dbReference>
<dbReference type="Pfam" id="PF07521">
    <property type="entry name" value="RMMBL"/>
    <property type="match status" value="1"/>
</dbReference>
<dbReference type="Pfam" id="PF22505">
    <property type="entry name" value="RNase_J_b_CASP"/>
    <property type="match status" value="1"/>
</dbReference>
<dbReference type="Pfam" id="PF17770">
    <property type="entry name" value="RNase_J_C"/>
    <property type="match status" value="1"/>
</dbReference>
<dbReference type="SMART" id="SM00849">
    <property type="entry name" value="Lactamase_B"/>
    <property type="match status" value="1"/>
</dbReference>
<dbReference type="SUPFAM" id="SSF56281">
    <property type="entry name" value="Metallo-hydrolase/oxidoreductase"/>
    <property type="match status" value="1"/>
</dbReference>
<dbReference type="PROSITE" id="PS01292">
    <property type="entry name" value="UPF0036"/>
    <property type="match status" value="1"/>
</dbReference>
<gene>
    <name evidence="2" type="primary">rnj</name>
    <name type="ordered locus">MG139</name>
</gene>
<proteinExistence type="inferred from homology"/>